<feature type="chain" id="PRO_1000187223" description="L-rhamnose mutarotase">
    <location>
        <begin position="1"/>
        <end position="104"/>
    </location>
</feature>
<feature type="active site" description="Proton donor" evidence="1">
    <location>
        <position position="22"/>
    </location>
</feature>
<feature type="binding site" evidence="1">
    <location>
        <position position="18"/>
    </location>
    <ligand>
        <name>substrate</name>
    </ligand>
</feature>
<feature type="binding site" evidence="1">
    <location>
        <position position="41"/>
    </location>
    <ligand>
        <name>substrate</name>
    </ligand>
</feature>
<feature type="binding site" evidence="1">
    <location>
        <begin position="76"/>
        <end position="77"/>
    </location>
    <ligand>
        <name>substrate</name>
    </ligand>
</feature>
<sequence>MIRKAFVMQVNPDAHEEYQRRHNPIWPELEAVLKDHGAHHYAIYLDKERHLLFATVEIESEARWEAVASTEVCQRWWKYMREVMPSNPDNSPLSAELKEVFYLA</sequence>
<name>RHAM_KLEP3</name>
<evidence type="ECO:0000255" key="1">
    <source>
        <dbReference type="HAMAP-Rule" id="MF_01663"/>
    </source>
</evidence>
<reference key="1">
    <citation type="journal article" date="2008" name="PLoS Genet.">
        <title>Complete genome sequence of the N2-fixing broad host range endophyte Klebsiella pneumoniae 342 and virulence predictions verified in mice.</title>
        <authorList>
            <person name="Fouts D.E."/>
            <person name="Tyler H.L."/>
            <person name="DeBoy R.T."/>
            <person name="Daugherty S."/>
            <person name="Ren Q."/>
            <person name="Badger J.H."/>
            <person name="Durkin A.S."/>
            <person name="Huot H."/>
            <person name="Shrivastava S."/>
            <person name="Kothari S."/>
            <person name="Dodson R.J."/>
            <person name="Mohamoud Y."/>
            <person name="Khouri H."/>
            <person name="Roesch L.F.W."/>
            <person name="Krogfelt K.A."/>
            <person name="Struve C."/>
            <person name="Triplett E.W."/>
            <person name="Methe B.A."/>
        </authorList>
    </citation>
    <scope>NUCLEOTIDE SEQUENCE [LARGE SCALE GENOMIC DNA]</scope>
    <source>
        <strain>342</strain>
    </source>
</reference>
<organism>
    <name type="scientific">Klebsiella pneumoniae (strain 342)</name>
    <dbReference type="NCBI Taxonomy" id="507522"/>
    <lineage>
        <taxon>Bacteria</taxon>
        <taxon>Pseudomonadati</taxon>
        <taxon>Pseudomonadota</taxon>
        <taxon>Gammaproteobacteria</taxon>
        <taxon>Enterobacterales</taxon>
        <taxon>Enterobacteriaceae</taxon>
        <taxon>Klebsiella/Raoultella group</taxon>
        <taxon>Klebsiella</taxon>
        <taxon>Klebsiella pneumoniae complex</taxon>
    </lineage>
</organism>
<keyword id="KW-0119">Carbohydrate metabolism</keyword>
<keyword id="KW-0963">Cytoplasm</keyword>
<keyword id="KW-0413">Isomerase</keyword>
<keyword id="KW-0684">Rhamnose metabolism</keyword>
<protein>
    <recommendedName>
        <fullName evidence="1">L-rhamnose mutarotase</fullName>
        <ecNumber evidence="1">5.1.3.32</ecNumber>
    </recommendedName>
    <alternativeName>
        <fullName evidence="1">Rhamnose 1-epimerase</fullName>
    </alternativeName>
    <alternativeName>
        <fullName evidence="1">Type-3 mutarotase</fullName>
    </alternativeName>
</protein>
<dbReference type="EC" id="5.1.3.32" evidence="1"/>
<dbReference type="EMBL" id="CP000964">
    <property type="protein sequence ID" value="ACI10635.1"/>
    <property type="molecule type" value="Genomic_DNA"/>
</dbReference>
<dbReference type="SMR" id="B5XZ60"/>
<dbReference type="KEGG" id="kpe:KPK_5476"/>
<dbReference type="HOGENOM" id="CLU_100689_2_0_6"/>
<dbReference type="UniPathway" id="UPA00125"/>
<dbReference type="Proteomes" id="UP000001734">
    <property type="component" value="Chromosome"/>
</dbReference>
<dbReference type="GO" id="GO:0005737">
    <property type="term" value="C:cytoplasm"/>
    <property type="evidence" value="ECO:0007669"/>
    <property type="project" value="UniProtKB-SubCell"/>
</dbReference>
<dbReference type="GO" id="GO:0062192">
    <property type="term" value="F:L-rhamnose mutarotase activity"/>
    <property type="evidence" value="ECO:0007669"/>
    <property type="project" value="UniProtKB-EC"/>
</dbReference>
<dbReference type="GO" id="GO:0019301">
    <property type="term" value="P:rhamnose catabolic process"/>
    <property type="evidence" value="ECO:0007669"/>
    <property type="project" value="TreeGrafter"/>
</dbReference>
<dbReference type="Gene3D" id="3.30.70.100">
    <property type="match status" value="1"/>
</dbReference>
<dbReference type="HAMAP" id="MF_01663">
    <property type="entry name" value="L_rham_rotase"/>
    <property type="match status" value="1"/>
</dbReference>
<dbReference type="InterPro" id="IPR011008">
    <property type="entry name" value="Dimeric_a/b-barrel"/>
</dbReference>
<dbReference type="InterPro" id="IPR013448">
    <property type="entry name" value="L-rhamnose_mutarotase"/>
</dbReference>
<dbReference type="InterPro" id="IPR008000">
    <property type="entry name" value="Rham/fucose_mutarotase"/>
</dbReference>
<dbReference type="NCBIfam" id="TIGR02625">
    <property type="entry name" value="YiiL_rotase"/>
    <property type="match status" value="1"/>
</dbReference>
<dbReference type="PANTHER" id="PTHR34389">
    <property type="entry name" value="L-RHAMNOSE MUTAROTASE"/>
    <property type="match status" value="1"/>
</dbReference>
<dbReference type="PANTHER" id="PTHR34389:SF2">
    <property type="entry name" value="L-RHAMNOSE MUTAROTASE"/>
    <property type="match status" value="1"/>
</dbReference>
<dbReference type="Pfam" id="PF05336">
    <property type="entry name" value="rhaM"/>
    <property type="match status" value="1"/>
</dbReference>
<dbReference type="SUPFAM" id="SSF54909">
    <property type="entry name" value="Dimeric alpha+beta barrel"/>
    <property type="match status" value="1"/>
</dbReference>
<comment type="function">
    <text evidence="1">Involved in the anomeric conversion of L-rhamnose.</text>
</comment>
<comment type="catalytic activity">
    <reaction evidence="1">
        <text>alpha-L-rhamnose = beta-L-rhamnose</text>
        <dbReference type="Rhea" id="RHEA:25584"/>
        <dbReference type="ChEBI" id="CHEBI:27586"/>
        <dbReference type="ChEBI" id="CHEBI:27907"/>
        <dbReference type="EC" id="5.1.3.32"/>
    </reaction>
</comment>
<comment type="pathway">
    <text evidence="1">Carbohydrate metabolism; L-rhamnose metabolism.</text>
</comment>
<comment type="subunit">
    <text evidence="1">Homodimer.</text>
</comment>
<comment type="subcellular location">
    <subcellularLocation>
        <location evidence="1">Cytoplasm</location>
    </subcellularLocation>
</comment>
<comment type="similarity">
    <text evidence="1">Belongs to the rhamnose mutarotase family.</text>
</comment>
<proteinExistence type="inferred from homology"/>
<gene>
    <name evidence="1" type="primary">rhaM</name>
    <name type="ordered locus">KPK_5476</name>
</gene>
<accession>B5XZ60</accession>